<dbReference type="EC" id="3.6.5.n1" evidence="1"/>
<dbReference type="EMBL" id="CP001130">
    <property type="protein sequence ID" value="ACG56790.1"/>
    <property type="molecule type" value="Genomic_DNA"/>
</dbReference>
<dbReference type="RefSeq" id="WP_012513147.1">
    <property type="nucleotide sequence ID" value="NC_011126.1"/>
</dbReference>
<dbReference type="SMR" id="B4U6M2"/>
<dbReference type="STRING" id="380749.HY04AAS1_0098"/>
<dbReference type="KEGG" id="hya:HY04AAS1_0098"/>
<dbReference type="eggNOG" id="COG0481">
    <property type="taxonomic scope" value="Bacteria"/>
</dbReference>
<dbReference type="HOGENOM" id="CLU_009995_3_3_0"/>
<dbReference type="OrthoDB" id="9804431at2"/>
<dbReference type="GO" id="GO:0005886">
    <property type="term" value="C:plasma membrane"/>
    <property type="evidence" value="ECO:0007669"/>
    <property type="project" value="UniProtKB-SubCell"/>
</dbReference>
<dbReference type="GO" id="GO:0005525">
    <property type="term" value="F:GTP binding"/>
    <property type="evidence" value="ECO:0007669"/>
    <property type="project" value="UniProtKB-UniRule"/>
</dbReference>
<dbReference type="GO" id="GO:0003924">
    <property type="term" value="F:GTPase activity"/>
    <property type="evidence" value="ECO:0007669"/>
    <property type="project" value="UniProtKB-UniRule"/>
</dbReference>
<dbReference type="GO" id="GO:0043022">
    <property type="term" value="F:ribosome binding"/>
    <property type="evidence" value="ECO:0007669"/>
    <property type="project" value="UniProtKB-UniRule"/>
</dbReference>
<dbReference type="GO" id="GO:0003746">
    <property type="term" value="F:translation elongation factor activity"/>
    <property type="evidence" value="ECO:0007669"/>
    <property type="project" value="UniProtKB-UniRule"/>
</dbReference>
<dbReference type="GO" id="GO:0045727">
    <property type="term" value="P:positive regulation of translation"/>
    <property type="evidence" value="ECO:0007669"/>
    <property type="project" value="UniProtKB-UniRule"/>
</dbReference>
<dbReference type="CDD" id="cd03699">
    <property type="entry name" value="EF4_II"/>
    <property type="match status" value="1"/>
</dbReference>
<dbReference type="CDD" id="cd16260">
    <property type="entry name" value="EF4_III"/>
    <property type="match status" value="1"/>
</dbReference>
<dbReference type="CDD" id="cd01890">
    <property type="entry name" value="LepA"/>
    <property type="match status" value="1"/>
</dbReference>
<dbReference type="CDD" id="cd03709">
    <property type="entry name" value="lepA_C"/>
    <property type="match status" value="1"/>
</dbReference>
<dbReference type="FunFam" id="3.40.50.300:FF:000078">
    <property type="entry name" value="Elongation factor 4"/>
    <property type="match status" value="1"/>
</dbReference>
<dbReference type="FunFam" id="2.40.30.10:FF:000015">
    <property type="entry name" value="Translation factor GUF1, mitochondrial"/>
    <property type="match status" value="1"/>
</dbReference>
<dbReference type="FunFam" id="3.30.70.240:FF:000007">
    <property type="entry name" value="Translation factor GUF1, mitochondrial"/>
    <property type="match status" value="1"/>
</dbReference>
<dbReference type="FunFam" id="3.30.70.2570:FF:000001">
    <property type="entry name" value="Translation factor GUF1, mitochondrial"/>
    <property type="match status" value="1"/>
</dbReference>
<dbReference type="FunFam" id="3.30.70.870:FF:000004">
    <property type="entry name" value="Translation factor GUF1, mitochondrial"/>
    <property type="match status" value="1"/>
</dbReference>
<dbReference type="Gene3D" id="3.30.70.240">
    <property type="match status" value="1"/>
</dbReference>
<dbReference type="Gene3D" id="3.30.70.2570">
    <property type="entry name" value="Elongation factor 4, C-terminal domain"/>
    <property type="match status" value="1"/>
</dbReference>
<dbReference type="Gene3D" id="3.30.70.870">
    <property type="entry name" value="Elongation Factor G (Translational Gtpase), domain 3"/>
    <property type="match status" value="1"/>
</dbReference>
<dbReference type="Gene3D" id="3.40.50.300">
    <property type="entry name" value="P-loop containing nucleotide triphosphate hydrolases"/>
    <property type="match status" value="1"/>
</dbReference>
<dbReference type="Gene3D" id="2.40.30.10">
    <property type="entry name" value="Translation factors"/>
    <property type="match status" value="1"/>
</dbReference>
<dbReference type="HAMAP" id="MF_00071">
    <property type="entry name" value="LepA"/>
    <property type="match status" value="1"/>
</dbReference>
<dbReference type="InterPro" id="IPR006297">
    <property type="entry name" value="EF-4"/>
</dbReference>
<dbReference type="InterPro" id="IPR035647">
    <property type="entry name" value="EFG_III/V"/>
</dbReference>
<dbReference type="InterPro" id="IPR000640">
    <property type="entry name" value="EFG_V-like"/>
</dbReference>
<dbReference type="InterPro" id="IPR004161">
    <property type="entry name" value="EFTu-like_2"/>
</dbReference>
<dbReference type="InterPro" id="IPR031157">
    <property type="entry name" value="G_TR_CS"/>
</dbReference>
<dbReference type="InterPro" id="IPR038363">
    <property type="entry name" value="LepA_C_sf"/>
</dbReference>
<dbReference type="InterPro" id="IPR013842">
    <property type="entry name" value="LepA_CTD"/>
</dbReference>
<dbReference type="InterPro" id="IPR035654">
    <property type="entry name" value="LepA_IV"/>
</dbReference>
<dbReference type="InterPro" id="IPR027417">
    <property type="entry name" value="P-loop_NTPase"/>
</dbReference>
<dbReference type="InterPro" id="IPR005225">
    <property type="entry name" value="Small_GTP-bd"/>
</dbReference>
<dbReference type="InterPro" id="IPR000795">
    <property type="entry name" value="T_Tr_GTP-bd_dom"/>
</dbReference>
<dbReference type="InterPro" id="IPR009000">
    <property type="entry name" value="Transl_B-barrel_sf"/>
</dbReference>
<dbReference type="NCBIfam" id="TIGR01393">
    <property type="entry name" value="lepA"/>
    <property type="match status" value="1"/>
</dbReference>
<dbReference type="NCBIfam" id="TIGR00231">
    <property type="entry name" value="small_GTP"/>
    <property type="match status" value="1"/>
</dbReference>
<dbReference type="PANTHER" id="PTHR43512:SF4">
    <property type="entry name" value="TRANSLATION FACTOR GUF1 HOMOLOG, CHLOROPLASTIC"/>
    <property type="match status" value="1"/>
</dbReference>
<dbReference type="PANTHER" id="PTHR43512">
    <property type="entry name" value="TRANSLATION FACTOR GUF1-RELATED"/>
    <property type="match status" value="1"/>
</dbReference>
<dbReference type="Pfam" id="PF00679">
    <property type="entry name" value="EFG_C"/>
    <property type="match status" value="1"/>
</dbReference>
<dbReference type="Pfam" id="PF00009">
    <property type="entry name" value="GTP_EFTU"/>
    <property type="match status" value="1"/>
</dbReference>
<dbReference type="Pfam" id="PF03144">
    <property type="entry name" value="GTP_EFTU_D2"/>
    <property type="match status" value="1"/>
</dbReference>
<dbReference type="Pfam" id="PF06421">
    <property type="entry name" value="LepA_C"/>
    <property type="match status" value="1"/>
</dbReference>
<dbReference type="PRINTS" id="PR00315">
    <property type="entry name" value="ELONGATNFCT"/>
</dbReference>
<dbReference type="SMART" id="SM00838">
    <property type="entry name" value="EFG_C"/>
    <property type="match status" value="1"/>
</dbReference>
<dbReference type="SUPFAM" id="SSF54980">
    <property type="entry name" value="EF-G C-terminal domain-like"/>
    <property type="match status" value="2"/>
</dbReference>
<dbReference type="SUPFAM" id="SSF52540">
    <property type="entry name" value="P-loop containing nucleoside triphosphate hydrolases"/>
    <property type="match status" value="1"/>
</dbReference>
<dbReference type="SUPFAM" id="SSF50447">
    <property type="entry name" value="Translation proteins"/>
    <property type="match status" value="1"/>
</dbReference>
<dbReference type="PROSITE" id="PS00301">
    <property type="entry name" value="G_TR_1"/>
    <property type="match status" value="1"/>
</dbReference>
<dbReference type="PROSITE" id="PS51722">
    <property type="entry name" value="G_TR_2"/>
    <property type="match status" value="1"/>
</dbReference>
<proteinExistence type="inferred from homology"/>
<evidence type="ECO:0000255" key="1">
    <source>
        <dbReference type="HAMAP-Rule" id="MF_00071"/>
    </source>
</evidence>
<accession>B4U6M2</accession>
<reference key="1">
    <citation type="journal article" date="2009" name="J. Bacteriol.">
        <title>Complete and draft genome sequences of six members of the Aquificales.</title>
        <authorList>
            <person name="Reysenbach A.-L."/>
            <person name="Hamamura N."/>
            <person name="Podar M."/>
            <person name="Griffiths E."/>
            <person name="Ferreira S."/>
            <person name="Hochstein R."/>
            <person name="Heidelberg J."/>
            <person name="Johnson J."/>
            <person name="Mead D."/>
            <person name="Pohorille A."/>
            <person name="Sarmiento M."/>
            <person name="Schweighofer K."/>
            <person name="Seshadri R."/>
            <person name="Voytek M.A."/>
        </authorList>
    </citation>
    <scope>NUCLEOTIDE SEQUENCE [LARGE SCALE GENOMIC DNA]</scope>
    <source>
        <strain>Y04AAS1</strain>
    </source>
</reference>
<name>LEPA_HYDS0</name>
<sequence>MENIRNFSIIAHVDHGKSTLADRLIEFCGAITDREKKDQMLDTLDIERERGITIKLQAVKINYHSKIQNKDFTLHLIDTPGHVDFSYEVSRSLAACEGALLLIDASQGIEAQTVANFWKAVEQNLVIIPVINKIDLPAADPDRIKLQIRDILGLDPDEAILASAKEGIGIEEILEAITKRIPPPKGDENAPLKALIFDSYYDPYRGAVAFVRIFDGSLKVGDRIKLFSTGKEFEVTEVGAQTPKMTKLPILKAGDVGYIAASIKDVRDIRVGDTITLKSNPTKEAIPGFKTAKPMVFAGLYPTEDSDFEELRDALEKYSINDAAITYEPETSPAIGMGFRCGFLGLLHMEIVQERLSREYNIDVITTAPSVVYRLKLKNRSDILEVKSSNDIPDNFGLIEYIEEPYVLATIITPKDYVGNIINICQDKRGIQVKFSYLDQNTALLEYEMPLQEIIVDFHDKIKSASKGYASFDYEFLGYKESDLVKLTIMINKEPVDALSFLVHKDKAYRKARALVEQLKETIPRQLFEINVQAAIGSKIIASERIPPMRANVTAKCYGGDISRKRKLLEKQKEGKKRMKQFGKVSLPQEAFLSVLKAQ</sequence>
<organism>
    <name type="scientific">Hydrogenobaculum sp. (strain Y04AAS1)</name>
    <dbReference type="NCBI Taxonomy" id="380749"/>
    <lineage>
        <taxon>Bacteria</taxon>
        <taxon>Pseudomonadati</taxon>
        <taxon>Aquificota</taxon>
        <taxon>Aquificia</taxon>
        <taxon>Aquificales</taxon>
        <taxon>Aquificaceae</taxon>
        <taxon>Hydrogenobaculum</taxon>
    </lineage>
</organism>
<comment type="function">
    <text evidence="1">Required for accurate and efficient protein synthesis under certain stress conditions. May act as a fidelity factor of the translation reaction, by catalyzing a one-codon backward translocation of tRNAs on improperly translocated ribosomes. Back-translocation proceeds from a post-translocation (POST) complex to a pre-translocation (PRE) complex, thus giving elongation factor G a second chance to translocate the tRNAs correctly. Binds to ribosomes in a GTP-dependent manner.</text>
</comment>
<comment type="catalytic activity">
    <reaction evidence="1">
        <text>GTP + H2O = GDP + phosphate + H(+)</text>
        <dbReference type="Rhea" id="RHEA:19669"/>
        <dbReference type="ChEBI" id="CHEBI:15377"/>
        <dbReference type="ChEBI" id="CHEBI:15378"/>
        <dbReference type="ChEBI" id="CHEBI:37565"/>
        <dbReference type="ChEBI" id="CHEBI:43474"/>
        <dbReference type="ChEBI" id="CHEBI:58189"/>
        <dbReference type="EC" id="3.6.5.n1"/>
    </reaction>
</comment>
<comment type="subcellular location">
    <subcellularLocation>
        <location evidence="1">Cell inner membrane</location>
        <topology evidence="1">Peripheral membrane protein</topology>
        <orientation evidence="1">Cytoplasmic side</orientation>
    </subcellularLocation>
</comment>
<comment type="similarity">
    <text evidence="1">Belongs to the TRAFAC class translation factor GTPase superfamily. Classic translation factor GTPase family. LepA subfamily.</text>
</comment>
<feature type="chain" id="PRO_1000092408" description="Elongation factor 4">
    <location>
        <begin position="1"/>
        <end position="599"/>
    </location>
</feature>
<feature type="domain" description="tr-type G">
    <location>
        <begin position="2"/>
        <end position="185"/>
    </location>
</feature>
<feature type="binding site" evidence="1">
    <location>
        <begin position="14"/>
        <end position="19"/>
    </location>
    <ligand>
        <name>GTP</name>
        <dbReference type="ChEBI" id="CHEBI:37565"/>
    </ligand>
</feature>
<feature type="binding site" evidence="1">
    <location>
        <begin position="132"/>
        <end position="135"/>
    </location>
    <ligand>
        <name>GTP</name>
        <dbReference type="ChEBI" id="CHEBI:37565"/>
    </ligand>
</feature>
<gene>
    <name evidence="1" type="primary">lepA</name>
    <name type="ordered locus">HY04AAS1_0098</name>
</gene>
<protein>
    <recommendedName>
        <fullName evidence="1">Elongation factor 4</fullName>
        <shortName evidence="1">EF-4</shortName>
        <ecNumber evidence="1">3.6.5.n1</ecNumber>
    </recommendedName>
    <alternativeName>
        <fullName evidence="1">Ribosomal back-translocase LepA</fullName>
    </alternativeName>
</protein>
<keyword id="KW-0997">Cell inner membrane</keyword>
<keyword id="KW-1003">Cell membrane</keyword>
<keyword id="KW-0342">GTP-binding</keyword>
<keyword id="KW-0378">Hydrolase</keyword>
<keyword id="KW-0472">Membrane</keyword>
<keyword id="KW-0547">Nucleotide-binding</keyword>
<keyword id="KW-0648">Protein biosynthesis</keyword>